<reference key="1">
    <citation type="journal article" date="2000" name="Nature">
        <title>DNA sequence of both chromosomes of the cholera pathogen Vibrio cholerae.</title>
        <authorList>
            <person name="Heidelberg J.F."/>
            <person name="Eisen J.A."/>
            <person name="Nelson W.C."/>
            <person name="Clayton R.A."/>
            <person name="Gwinn M.L."/>
            <person name="Dodson R.J."/>
            <person name="Haft D.H."/>
            <person name="Hickey E.K."/>
            <person name="Peterson J.D."/>
            <person name="Umayam L.A."/>
            <person name="Gill S.R."/>
            <person name="Nelson K.E."/>
            <person name="Read T.D."/>
            <person name="Tettelin H."/>
            <person name="Richardson D.L."/>
            <person name="Ermolaeva M.D."/>
            <person name="Vamathevan J.J."/>
            <person name="Bass S."/>
            <person name="Qin H."/>
            <person name="Dragoi I."/>
            <person name="Sellers P."/>
            <person name="McDonald L.A."/>
            <person name="Utterback T.R."/>
            <person name="Fleischmann R.D."/>
            <person name="Nierman W.C."/>
            <person name="White O."/>
            <person name="Salzberg S.L."/>
            <person name="Smith H.O."/>
            <person name="Colwell R.R."/>
            <person name="Mekalanos J.J."/>
            <person name="Venter J.C."/>
            <person name="Fraser C.M."/>
        </authorList>
    </citation>
    <scope>NUCLEOTIDE SEQUENCE [LARGE SCALE GENOMIC DNA]</scope>
    <source>
        <strain>ATCC 39315 / El Tor Inaba N16961</strain>
    </source>
</reference>
<proteinExistence type="inferred from homology"/>
<sequence>MDHRLLEIVACPVCKGKLTYDKDRQELICKLDRLAYPIKEGIPVLLEPEARSMSMDEGR</sequence>
<protein>
    <recommendedName>
        <fullName evidence="1">UPF0434 protein VC_1876</fullName>
    </recommendedName>
</protein>
<feature type="chain" id="PRO_0000291180" description="UPF0434 protein VC_1876">
    <location>
        <begin position="1"/>
        <end position="59"/>
    </location>
</feature>
<organism>
    <name type="scientific">Vibrio cholerae serotype O1 (strain ATCC 39315 / El Tor Inaba N16961)</name>
    <dbReference type="NCBI Taxonomy" id="243277"/>
    <lineage>
        <taxon>Bacteria</taxon>
        <taxon>Pseudomonadati</taxon>
        <taxon>Pseudomonadota</taxon>
        <taxon>Gammaproteobacteria</taxon>
        <taxon>Vibrionales</taxon>
        <taxon>Vibrionaceae</taxon>
        <taxon>Vibrio</taxon>
    </lineage>
</organism>
<name>Y1876_VIBCH</name>
<evidence type="ECO:0000255" key="1">
    <source>
        <dbReference type="HAMAP-Rule" id="MF_01187"/>
    </source>
</evidence>
<gene>
    <name type="ordered locus">VC_1876</name>
</gene>
<dbReference type="EMBL" id="AE003852">
    <property type="protein sequence ID" value="AAF95024.1"/>
    <property type="molecule type" value="Genomic_DNA"/>
</dbReference>
<dbReference type="PIR" id="B82146">
    <property type="entry name" value="B82146"/>
</dbReference>
<dbReference type="RefSeq" id="NP_231510.1">
    <property type="nucleotide sequence ID" value="NC_002505.1"/>
</dbReference>
<dbReference type="RefSeq" id="WP_000350068.1">
    <property type="nucleotide sequence ID" value="NZ_LT906614.1"/>
</dbReference>
<dbReference type="SMR" id="Q9KQX1"/>
<dbReference type="STRING" id="243277.VC_1876"/>
<dbReference type="DNASU" id="2613630"/>
<dbReference type="EnsemblBacteria" id="AAF95024">
    <property type="protein sequence ID" value="AAF95024"/>
    <property type="gene ID" value="VC_1876"/>
</dbReference>
<dbReference type="KEGG" id="vch:VC_1876"/>
<dbReference type="PATRIC" id="fig|243277.26.peg.1792"/>
<dbReference type="eggNOG" id="COG2835">
    <property type="taxonomic scope" value="Bacteria"/>
</dbReference>
<dbReference type="HOGENOM" id="CLU_155659_3_1_6"/>
<dbReference type="Proteomes" id="UP000000584">
    <property type="component" value="Chromosome 1"/>
</dbReference>
<dbReference type="GO" id="GO:0005829">
    <property type="term" value="C:cytosol"/>
    <property type="evidence" value="ECO:0000318"/>
    <property type="project" value="GO_Central"/>
</dbReference>
<dbReference type="FunFam" id="2.20.25.10:FF:000002">
    <property type="entry name" value="UPF0434 protein YcaR"/>
    <property type="match status" value="1"/>
</dbReference>
<dbReference type="Gene3D" id="2.20.25.10">
    <property type="match status" value="1"/>
</dbReference>
<dbReference type="HAMAP" id="MF_01187">
    <property type="entry name" value="UPF0434"/>
    <property type="match status" value="1"/>
</dbReference>
<dbReference type="InterPro" id="IPR005651">
    <property type="entry name" value="Trm112-like"/>
</dbReference>
<dbReference type="PANTHER" id="PTHR33505:SF4">
    <property type="entry name" value="PROTEIN PREY, MITOCHONDRIAL"/>
    <property type="match status" value="1"/>
</dbReference>
<dbReference type="PANTHER" id="PTHR33505">
    <property type="entry name" value="ZGC:162634"/>
    <property type="match status" value="1"/>
</dbReference>
<dbReference type="Pfam" id="PF03966">
    <property type="entry name" value="Trm112p"/>
    <property type="match status" value="1"/>
</dbReference>
<dbReference type="SUPFAM" id="SSF158997">
    <property type="entry name" value="Trm112p-like"/>
    <property type="match status" value="1"/>
</dbReference>
<accession>Q9KQX1</accession>
<keyword id="KW-1185">Reference proteome</keyword>
<comment type="similarity">
    <text evidence="1">Belongs to the UPF0434 family.</text>
</comment>